<reference key="1">
    <citation type="submission" date="2008-06" db="EMBL/GenBank/DDBJ databases">
        <title>Complete sequence of Stenotrophomonas maltophilia R551-3.</title>
        <authorList>
            <consortium name="US DOE Joint Genome Institute"/>
            <person name="Lucas S."/>
            <person name="Copeland A."/>
            <person name="Lapidus A."/>
            <person name="Glavina del Rio T."/>
            <person name="Dalin E."/>
            <person name="Tice H."/>
            <person name="Pitluck S."/>
            <person name="Chain P."/>
            <person name="Malfatti S."/>
            <person name="Shin M."/>
            <person name="Vergez L."/>
            <person name="Lang D."/>
            <person name="Schmutz J."/>
            <person name="Larimer F."/>
            <person name="Land M."/>
            <person name="Hauser L."/>
            <person name="Kyrpides N."/>
            <person name="Mikhailova N."/>
            <person name="Taghavi S."/>
            <person name="Monchy S."/>
            <person name="Newman L."/>
            <person name="Vangronsveld J."/>
            <person name="van der Lelie D."/>
            <person name="Richardson P."/>
        </authorList>
    </citation>
    <scope>NUCLEOTIDE SEQUENCE [LARGE SCALE GENOMIC DNA]</scope>
    <source>
        <strain>R551-3</strain>
    </source>
</reference>
<gene>
    <name evidence="1" type="primary">rplT</name>
    <name type="ordered locus">Smal_2802</name>
</gene>
<proteinExistence type="inferred from homology"/>
<organism>
    <name type="scientific">Stenotrophomonas maltophilia (strain R551-3)</name>
    <dbReference type="NCBI Taxonomy" id="391008"/>
    <lineage>
        <taxon>Bacteria</taxon>
        <taxon>Pseudomonadati</taxon>
        <taxon>Pseudomonadota</taxon>
        <taxon>Gammaproteobacteria</taxon>
        <taxon>Lysobacterales</taxon>
        <taxon>Lysobacteraceae</taxon>
        <taxon>Stenotrophomonas</taxon>
        <taxon>Stenotrophomonas maltophilia group</taxon>
    </lineage>
</organism>
<accession>B4SQH1</accession>
<evidence type="ECO:0000255" key="1">
    <source>
        <dbReference type="HAMAP-Rule" id="MF_00382"/>
    </source>
</evidence>
<evidence type="ECO:0000305" key="2"/>
<name>RL20_STRM5</name>
<sequence length="119" mass="13399">MARVKRGVQARRRHKKILDLAKGYYNARRKVFRVAKQAVIKAQQYAYIGRKQKKRNFRSLWITRINAAARINGLSYSRFMNGLLKAGITLDRKVLADIAVHDAAGFTALAEKAKGALAA</sequence>
<comment type="function">
    <text evidence="1">Binds directly to 23S ribosomal RNA and is necessary for the in vitro assembly process of the 50S ribosomal subunit. It is not involved in the protein synthesizing functions of that subunit.</text>
</comment>
<comment type="similarity">
    <text evidence="1">Belongs to the bacterial ribosomal protein bL20 family.</text>
</comment>
<feature type="chain" id="PRO_1000122376" description="Large ribosomal subunit protein bL20">
    <location>
        <begin position="1"/>
        <end position="119"/>
    </location>
</feature>
<keyword id="KW-0687">Ribonucleoprotein</keyword>
<keyword id="KW-0689">Ribosomal protein</keyword>
<keyword id="KW-0694">RNA-binding</keyword>
<keyword id="KW-0699">rRNA-binding</keyword>
<dbReference type="EMBL" id="CP001111">
    <property type="protein sequence ID" value="ACF52502.1"/>
    <property type="molecule type" value="Genomic_DNA"/>
</dbReference>
<dbReference type="RefSeq" id="WP_006380762.1">
    <property type="nucleotide sequence ID" value="NC_011071.1"/>
</dbReference>
<dbReference type="SMR" id="B4SQH1"/>
<dbReference type="STRING" id="391008.Smal_2802"/>
<dbReference type="KEGG" id="smt:Smal_2802"/>
<dbReference type="eggNOG" id="COG0292">
    <property type="taxonomic scope" value="Bacteria"/>
</dbReference>
<dbReference type="HOGENOM" id="CLU_123265_0_1_6"/>
<dbReference type="OrthoDB" id="9808966at2"/>
<dbReference type="Proteomes" id="UP000001867">
    <property type="component" value="Chromosome"/>
</dbReference>
<dbReference type="GO" id="GO:1990904">
    <property type="term" value="C:ribonucleoprotein complex"/>
    <property type="evidence" value="ECO:0007669"/>
    <property type="project" value="UniProtKB-KW"/>
</dbReference>
<dbReference type="GO" id="GO:0005840">
    <property type="term" value="C:ribosome"/>
    <property type="evidence" value="ECO:0007669"/>
    <property type="project" value="UniProtKB-KW"/>
</dbReference>
<dbReference type="GO" id="GO:0019843">
    <property type="term" value="F:rRNA binding"/>
    <property type="evidence" value="ECO:0007669"/>
    <property type="project" value="UniProtKB-UniRule"/>
</dbReference>
<dbReference type="GO" id="GO:0003735">
    <property type="term" value="F:structural constituent of ribosome"/>
    <property type="evidence" value="ECO:0007669"/>
    <property type="project" value="InterPro"/>
</dbReference>
<dbReference type="GO" id="GO:0000027">
    <property type="term" value="P:ribosomal large subunit assembly"/>
    <property type="evidence" value="ECO:0007669"/>
    <property type="project" value="UniProtKB-UniRule"/>
</dbReference>
<dbReference type="GO" id="GO:0006412">
    <property type="term" value="P:translation"/>
    <property type="evidence" value="ECO:0007669"/>
    <property type="project" value="InterPro"/>
</dbReference>
<dbReference type="CDD" id="cd07026">
    <property type="entry name" value="Ribosomal_L20"/>
    <property type="match status" value="1"/>
</dbReference>
<dbReference type="FunFam" id="1.10.1900.20:FF:000001">
    <property type="entry name" value="50S ribosomal protein L20"/>
    <property type="match status" value="1"/>
</dbReference>
<dbReference type="Gene3D" id="6.10.160.10">
    <property type="match status" value="1"/>
</dbReference>
<dbReference type="Gene3D" id="1.10.1900.20">
    <property type="entry name" value="Ribosomal protein L20"/>
    <property type="match status" value="1"/>
</dbReference>
<dbReference type="HAMAP" id="MF_00382">
    <property type="entry name" value="Ribosomal_bL20"/>
    <property type="match status" value="1"/>
</dbReference>
<dbReference type="InterPro" id="IPR005813">
    <property type="entry name" value="Ribosomal_bL20"/>
</dbReference>
<dbReference type="InterPro" id="IPR049946">
    <property type="entry name" value="RIBOSOMAL_L20_CS"/>
</dbReference>
<dbReference type="InterPro" id="IPR035566">
    <property type="entry name" value="Ribosomal_protein_bL20_C"/>
</dbReference>
<dbReference type="NCBIfam" id="TIGR01032">
    <property type="entry name" value="rplT_bact"/>
    <property type="match status" value="1"/>
</dbReference>
<dbReference type="PANTHER" id="PTHR10986">
    <property type="entry name" value="39S RIBOSOMAL PROTEIN L20"/>
    <property type="match status" value="1"/>
</dbReference>
<dbReference type="Pfam" id="PF00453">
    <property type="entry name" value="Ribosomal_L20"/>
    <property type="match status" value="1"/>
</dbReference>
<dbReference type="PRINTS" id="PR00062">
    <property type="entry name" value="RIBOSOMALL20"/>
</dbReference>
<dbReference type="SUPFAM" id="SSF74731">
    <property type="entry name" value="Ribosomal protein L20"/>
    <property type="match status" value="1"/>
</dbReference>
<dbReference type="PROSITE" id="PS00937">
    <property type="entry name" value="RIBOSOMAL_L20"/>
    <property type="match status" value="1"/>
</dbReference>
<protein>
    <recommendedName>
        <fullName evidence="1">Large ribosomal subunit protein bL20</fullName>
    </recommendedName>
    <alternativeName>
        <fullName evidence="2">50S ribosomal protein L20</fullName>
    </alternativeName>
</protein>